<proteinExistence type="evidence at protein level"/>
<name>UNGC_ASPV1</name>
<keyword id="KW-0413">Isomerase</keyword>
<keyword id="KW-0663">Pyridoxal phosphate</keyword>
<keyword id="KW-1185">Reference proteome</keyword>
<evidence type="ECO:0000250" key="1">
    <source>
        <dbReference type="UniProtKB" id="P32929"/>
    </source>
</evidence>
<evidence type="ECO:0000256" key="2">
    <source>
        <dbReference type="SAM" id="MobiDB-lite"/>
    </source>
</evidence>
<evidence type="ECO:0000269" key="3">
    <source>
    </source>
</evidence>
<evidence type="ECO:0000303" key="4">
    <source>
    </source>
</evidence>
<evidence type="ECO:0000305" key="5"/>
<evidence type="ECO:0000305" key="6">
    <source>
    </source>
</evidence>
<organism>
    <name type="scientific">Aspergillus violaceofuscus (strain CBS 115571)</name>
    <dbReference type="NCBI Taxonomy" id="1450538"/>
    <lineage>
        <taxon>Eukaryota</taxon>
        <taxon>Fungi</taxon>
        <taxon>Dikarya</taxon>
        <taxon>Ascomycota</taxon>
        <taxon>Pezizomycotina</taxon>
        <taxon>Eurotiomycetes</taxon>
        <taxon>Eurotiomycetidae</taxon>
        <taxon>Eurotiales</taxon>
        <taxon>Aspergillaceae</taxon>
        <taxon>Aspergillus</taxon>
    </lineage>
</organism>
<dbReference type="EC" id="5.1.1.1" evidence="3"/>
<dbReference type="EMBL" id="KZ825194">
    <property type="protein sequence ID" value="PYI15149.1"/>
    <property type="status" value="ALT_SEQ"/>
    <property type="molecule type" value="Genomic_DNA"/>
</dbReference>
<dbReference type="SMR" id="A0A2V5GUR2"/>
<dbReference type="STRING" id="1450538.A0A2V5GUR2"/>
<dbReference type="Proteomes" id="UP000249829">
    <property type="component" value="Unassembled WGS sequence"/>
</dbReference>
<dbReference type="GO" id="GO:0003962">
    <property type="term" value="F:cystathionine gamma-synthase activity"/>
    <property type="evidence" value="ECO:0007669"/>
    <property type="project" value="TreeGrafter"/>
</dbReference>
<dbReference type="GO" id="GO:0016853">
    <property type="term" value="F:isomerase activity"/>
    <property type="evidence" value="ECO:0007669"/>
    <property type="project" value="UniProtKB-KW"/>
</dbReference>
<dbReference type="GO" id="GO:0030170">
    <property type="term" value="F:pyridoxal phosphate binding"/>
    <property type="evidence" value="ECO:0007669"/>
    <property type="project" value="InterPro"/>
</dbReference>
<dbReference type="GO" id="GO:0019346">
    <property type="term" value="P:transsulfuration"/>
    <property type="evidence" value="ECO:0007669"/>
    <property type="project" value="InterPro"/>
</dbReference>
<dbReference type="Gene3D" id="3.90.1150.10">
    <property type="entry name" value="Aspartate Aminotransferase, domain 1"/>
    <property type="match status" value="1"/>
</dbReference>
<dbReference type="Gene3D" id="3.40.640.10">
    <property type="entry name" value="Type I PLP-dependent aspartate aminotransferase-like (Major domain)"/>
    <property type="match status" value="1"/>
</dbReference>
<dbReference type="InterPro" id="IPR000277">
    <property type="entry name" value="Cys/Met-Metab_PyrdxlP-dep_enz"/>
</dbReference>
<dbReference type="InterPro" id="IPR015424">
    <property type="entry name" value="PyrdxlP-dep_Trfase"/>
</dbReference>
<dbReference type="InterPro" id="IPR015421">
    <property type="entry name" value="PyrdxlP-dep_Trfase_major"/>
</dbReference>
<dbReference type="InterPro" id="IPR015422">
    <property type="entry name" value="PyrdxlP-dep_Trfase_small"/>
</dbReference>
<dbReference type="InterPro" id="IPR051750">
    <property type="entry name" value="Trans-sulfuration_enzymes"/>
</dbReference>
<dbReference type="PANTHER" id="PTHR42699">
    <property type="match status" value="1"/>
</dbReference>
<dbReference type="PANTHER" id="PTHR42699:SF1">
    <property type="entry name" value="CYSTATHIONINE GAMMA-SYNTHASE-RELATED"/>
    <property type="match status" value="1"/>
</dbReference>
<dbReference type="Pfam" id="PF01053">
    <property type="entry name" value="Cys_Met_Meta_PP"/>
    <property type="match status" value="1"/>
</dbReference>
<dbReference type="SUPFAM" id="SSF53383">
    <property type="entry name" value="PLP-dependent transferases"/>
    <property type="match status" value="1"/>
</dbReference>
<gene>
    <name evidence="4" type="primary">ungC</name>
    <name type="ORF">BO99DRAFT_416191</name>
</gene>
<sequence>MKTRPQALGLGEPYPGRAHSLVVQIPTWADMVAFGQGKAAAQMNHGYPRSVVHPDIRSLGSTILAKIHHKTAEAAPSSSLLLFSGVKAALCCKHYILRCMQGRDQGVLEDCVRVYEVSFGSSCMCRDHHHHHHHDDAHSGSPTLYAVLYPSAAAADAHAFWQRTGPGISSRLAQHCLRLQQQGSGPRVGALPAAASTASPMGSSLPDSHPVYAELRRRIAGYAQHSADEPPMTQPVTAPDVFLYGSGMAAIYHVHQAILAWRSGMSVHAGLLYEPTLRILQTHGPGVRSYSLGTAAELDELAAHLEQERVSGSPCAVPAIWCECPSNPILQTVDLQRLRALADQHDLLVVVDDSVASFANVDLLGVADIVVSSLSKYFSGYADVMAGSAILNPRSRHHATLLNQMARTHENSLFVDDALRLERNSRDFPARMARINATTESLVQQLGPRVADPKCPLTRLLYPSRCTSRGYYEGQMRWSSSSSPGAESRPRPGYGGVFSMEFADCGCAAAFFDHLEVYKGLSFGADVCIAAAYVQMTGRQNAPGTAHETLIRFSVGLEPAEEMLLRVETALEAAGRVFLAQGSRKP</sequence>
<protein>
    <recommendedName>
        <fullName evidence="4">Alanine racemase ungC</fullName>
        <ecNumber evidence="3">5.1.1.1</ecNumber>
    </recommendedName>
    <alternativeName>
        <fullName evidence="4">Unguisins biosynthesis cluster protein C</fullName>
    </alternativeName>
</protein>
<feature type="chain" id="PRO_0000458910" description="Alanine racemase ungC">
    <location>
        <begin position="1"/>
        <end position="586"/>
    </location>
</feature>
<feature type="region of interest" description="Disordered" evidence="2">
    <location>
        <begin position="187"/>
        <end position="206"/>
    </location>
</feature>
<feature type="compositionally biased region" description="Polar residues" evidence="2">
    <location>
        <begin position="196"/>
        <end position="206"/>
    </location>
</feature>
<comment type="function">
    <text evidence="3">Alanine racemase; part of the gene cluster that mediates the biosynthesis of the unguisins, gamma-aminobutyric acid (GABA)-containing fungal cyclic heptapeptides with the amino acid sequence cyclo-(D-Ala1-D-Val2-L-Phe3-D-Val4-D-Ala5-D-Trp6-GABA7) for unguisin A and cyclo-(D-Ala1-D-Val2-L-Leu3-D-Val4-D-Ala5-D-Trp6-GABA7) for unguisin B (PubMed:36715406). Within the pathway, the alanine racemase ungC catalyzes the interconversion of L-alanine and D-alanine, providing the D-alanine which is accepted by the first adenylation domain of the nonribosomal peptide synthetase (NRPS) ungA (PubMed:36715406). UngA is the main enzyme within the cluster which condenses the 7 residues using its respective 7 modules (PubMed:36715406). The terminal condensation domain (Ct) is involved in cyclization with D-alanine and thereby releasing of unguisins A and B (PubMed:36715406). Finally, the hydrolase ungD catalyzes the hydrolysis between the D-tryptophan and GABA residues of unguisins A and B to produce the corresponding linear peptides (PubMed:36715406).</text>
</comment>
<comment type="catalytic activity">
    <reaction evidence="3">
        <text>L-alanine = D-alanine</text>
        <dbReference type="Rhea" id="RHEA:20249"/>
        <dbReference type="ChEBI" id="CHEBI:57416"/>
        <dbReference type="ChEBI" id="CHEBI:57972"/>
        <dbReference type="EC" id="5.1.1.1"/>
    </reaction>
</comment>
<comment type="cofactor">
    <cofactor evidence="1">
        <name>pyridoxal 5'-phosphate</name>
        <dbReference type="ChEBI" id="CHEBI:597326"/>
    </cofactor>
</comment>
<comment type="pathway">
    <text evidence="3">Secondary metabolite biosynthesis.</text>
</comment>
<comment type="disruption phenotype">
    <text evidence="3">Impairs the production of unguisin A and B which could be restored in the presence of D-Ala.</text>
</comment>
<comment type="similarity">
    <text evidence="5">Belongs to the trans-sulfuration enzymes family.</text>
</comment>
<comment type="sequence caution" evidence="6">
    <conflict type="erroneous gene model prediction">
        <sequence resource="EMBL-CDS" id="PYI15149"/>
    </conflict>
</comment>
<accession>A0A2V5GUR2</accession>
<reference key="1">
    <citation type="submission" date="2018-02" db="EMBL/GenBank/DDBJ databases">
        <title>The genomes of Aspergillus section Nigri reveals drivers in fungal speciation.</title>
        <authorList>
            <consortium name="DOE Joint Genome Institute"/>
            <person name="Vesth T.C."/>
            <person name="Nybo J."/>
            <person name="Theobald S."/>
            <person name="Brandl J."/>
            <person name="Frisvad J.C."/>
            <person name="Nielsen K.F."/>
            <person name="Lyhne E.K."/>
            <person name="Kogle M.E."/>
            <person name="Kuo A."/>
            <person name="Riley R."/>
            <person name="Clum A."/>
            <person name="Nolan M."/>
            <person name="Lipzen A."/>
            <person name="Salamov A."/>
            <person name="Henrissat B."/>
            <person name="Wiebenga A."/>
            <person name="De vries R.P."/>
            <person name="Grigoriev I.V."/>
            <person name="Mortensen U.H."/>
            <person name="Andersen M.R."/>
            <person name="Baker S.E."/>
        </authorList>
    </citation>
    <scope>NUCLEOTIDE SEQUENCE [LARGE SCALE GENOMIC DNA]</scope>
    <source>
        <strain>CBS 115571</strain>
    </source>
</reference>
<reference key="2">
    <citation type="journal article" date="2023" name="J. Nat. Prod.">
        <title>Biosynthetic characterization, heterologous production, and genomics-guided discovery of GABA-containing fungal heptapeptides.</title>
        <authorList>
            <person name="Wei X."/>
            <person name="Chan T.K."/>
            <person name="Kong C.T.D."/>
            <person name="Matsuda Y."/>
        </authorList>
    </citation>
    <scope>FUNCTION</scope>
    <scope>CATALYTIC ACTIVITY</scope>
    <scope>DISRUPTION PHENOTYPE</scope>
    <scope>PATHWAY</scope>
</reference>